<gene>
    <name evidence="1" type="primary">rpmJ</name>
    <name type="ordered locus">Bphy_2817</name>
</gene>
<accession>B2JI43</accession>
<organism>
    <name type="scientific">Paraburkholderia phymatum (strain DSM 17167 / CIP 108236 / LMG 21445 / STM815)</name>
    <name type="common">Burkholderia phymatum</name>
    <dbReference type="NCBI Taxonomy" id="391038"/>
    <lineage>
        <taxon>Bacteria</taxon>
        <taxon>Pseudomonadati</taxon>
        <taxon>Pseudomonadota</taxon>
        <taxon>Betaproteobacteria</taxon>
        <taxon>Burkholderiales</taxon>
        <taxon>Burkholderiaceae</taxon>
        <taxon>Paraburkholderia</taxon>
    </lineage>
</organism>
<keyword id="KW-1185">Reference proteome</keyword>
<keyword id="KW-0687">Ribonucleoprotein</keyword>
<keyword id="KW-0689">Ribosomal protein</keyword>
<feature type="chain" id="PRO_1000101011" description="Large ribosomal subunit protein bL36">
    <location>
        <begin position="1"/>
        <end position="38"/>
    </location>
</feature>
<protein>
    <recommendedName>
        <fullName evidence="1">Large ribosomal subunit protein bL36</fullName>
    </recommendedName>
    <alternativeName>
        <fullName evidence="2">50S ribosomal protein L36</fullName>
    </alternativeName>
</protein>
<reference key="1">
    <citation type="journal article" date="2014" name="Stand. Genomic Sci.">
        <title>Complete genome sequence of Burkholderia phymatum STM815(T), a broad host range and efficient nitrogen-fixing symbiont of Mimosa species.</title>
        <authorList>
            <person name="Moulin L."/>
            <person name="Klonowska A."/>
            <person name="Caroline B."/>
            <person name="Booth K."/>
            <person name="Vriezen J.A."/>
            <person name="Melkonian R."/>
            <person name="James E.K."/>
            <person name="Young J.P."/>
            <person name="Bena G."/>
            <person name="Hauser L."/>
            <person name="Land M."/>
            <person name="Kyrpides N."/>
            <person name="Bruce D."/>
            <person name="Chain P."/>
            <person name="Copeland A."/>
            <person name="Pitluck S."/>
            <person name="Woyke T."/>
            <person name="Lizotte-Waniewski M."/>
            <person name="Bristow J."/>
            <person name="Riley M."/>
        </authorList>
    </citation>
    <scope>NUCLEOTIDE SEQUENCE [LARGE SCALE GENOMIC DNA]</scope>
    <source>
        <strain>DSM 17167 / CIP 108236 / LMG 21445 / STM815</strain>
    </source>
</reference>
<comment type="similarity">
    <text evidence="1">Belongs to the bacterial ribosomal protein bL36 family.</text>
</comment>
<proteinExistence type="inferred from homology"/>
<evidence type="ECO:0000255" key="1">
    <source>
        <dbReference type="HAMAP-Rule" id="MF_00251"/>
    </source>
</evidence>
<evidence type="ECO:0000305" key="2"/>
<dbReference type="EMBL" id="CP001043">
    <property type="protein sequence ID" value="ACC71989.1"/>
    <property type="molecule type" value="Genomic_DNA"/>
</dbReference>
<dbReference type="RefSeq" id="WP_004199844.1">
    <property type="nucleotide sequence ID" value="NZ_CADFGH010000028.1"/>
</dbReference>
<dbReference type="SMR" id="B2JI43"/>
<dbReference type="STRING" id="391038.Bphy_2817"/>
<dbReference type="GeneID" id="98107138"/>
<dbReference type="KEGG" id="bph:Bphy_2817"/>
<dbReference type="eggNOG" id="COG0257">
    <property type="taxonomic scope" value="Bacteria"/>
</dbReference>
<dbReference type="HOGENOM" id="CLU_135723_6_2_4"/>
<dbReference type="OrthoDB" id="9802520at2"/>
<dbReference type="Proteomes" id="UP000001192">
    <property type="component" value="Chromosome 1"/>
</dbReference>
<dbReference type="GO" id="GO:0005737">
    <property type="term" value="C:cytoplasm"/>
    <property type="evidence" value="ECO:0007669"/>
    <property type="project" value="UniProtKB-ARBA"/>
</dbReference>
<dbReference type="GO" id="GO:1990904">
    <property type="term" value="C:ribonucleoprotein complex"/>
    <property type="evidence" value="ECO:0007669"/>
    <property type="project" value="UniProtKB-KW"/>
</dbReference>
<dbReference type="GO" id="GO:0005840">
    <property type="term" value="C:ribosome"/>
    <property type="evidence" value="ECO:0007669"/>
    <property type="project" value="UniProtKB-KW"/>
</dbReference>
<dbReference type="GO" id="GO:0003735">
    <property type="term" value="F:structural constituent of ribosome"/>
    <property type="evidence" value="ECO:0007669"/>
    <property type="project" value="InterPro"/>
</dbReference>
<dbReference type="GO" id="GO:0006412">
    <property type="term" value="P:translation"/>
    <property type="evidence" value="ECO:0007669"/>
    <property type="project" value="UniProtKB-UniRule"/>
</dbReference>
<dbReference type="HAMAP" id="MF_00251">
    <property type="entry name" value="Ribosomal_bL36"/>
    <property type="match status" value="1"/>
</dbReference>
<dbReference type="InterPro" id="IPR000473">
    <property type="entry name" value="Ribosomal_bL36"/>
</dbReference>
<dbReference type="InterPro" id="IPR035977">
    <property type="entry name" value="Ribosomal_bL36_sp"/>
</dbReference>
<dbReference type="NCBIfam" id="TIGR01022">
    <property type="entry name" value="rpmJ_bact"/>
    <property type="match status" value="1"/>
</dbReference>
<dbReference type="PANTHER" id="PTHR42888">
    <property type="entry name" value="50S RIBOSOMAL PROTEIN L36, CHLOROPLASTIC"/>
    <property type="match status" value="1"/>
</dbReference>
<dbReference type="PANTHER" id="PTHR42888:SF1">
    <property type="entry name" value="LARGE RIBOSOMAL SUBUNIT PROTEIN BL36C"/>
    <property type="match status" value="1"/>
</dbReference>
<dbReference type="Pfam" id="PF00444">
    <property type="entry name" value="Ribosomal_L36"/>
    <property type="match status" value="1"/>
</dbReference>
<dbReference type="SUPFAM" id="SSF57840">
    <property type="entry name" value="Ribosomal protein L36"/>
    <property type="match status" value="1"/>
</dbReference>
<dbReference type="PROSITE" id="PS00828">
    <property type="entry name" value="RIBOSOMAL_L36"/>
    <property type="match status" value="1"/>
</dbReference>
<sequence length="38" mass="4410">MKVMASVKRICRNCKIIKRKGVVRVICSSDPRHKQRQG</sequence>
<name>RL36_PARP8</name>